<comment type="catalytic activity">
    <reaction evidence="1">
        <text>tRNA(Phe) + L-phenylalanine + ATP = L-phenylalanyl-tRNA(Phe) + AMP + diphosphate + H(+)</text>
        <dbReference type="Rhea" id="RHEA:19413"/>
        <dbReference type="Rhea" id="RHEA-COMP:9668"/>
        <dbReference type="Rhea" id="RHEA-COMP:9699"/>
        <dbReference type="ChEBI" id="CHEBI:15378"/>
        <dbReference type="ChEBI" id="CHEBI:30616"/>
        <dbReference type="ChEBI" id="CHEBI:33019"/>
        <dbReference type="ChEBI" id="CHEBI:58095"/>
        <dbReference type="ChEBI" id="CHEBI:78442"/>
        <dbReference type="ChEBI" id="CHEBI:78531"/>
        <dbReference type="ChEBI" id="CHEBI:456215"/>
        <dbReference type="EC" id="6.1.1.20"/>
    </reaction>
</comment>
<comment type="cofactor">
    <cofactor evidence="1">
        <name>Mg(2+)</name>
        <dbReference type="ChEBI" id="CHEBI:18420"/>
    </cofactor>
    <text evidence="1">Binds 2 magnesium ions per tetramer.</text>
</comment>
<comment type="subunit">
    <text evidence="1">Tetramer of two alpha and two beta subunits.</text>
</comment>
<comment type="subcellular location">
    <subcellularLocation>
        <location evidence="1">Cytoplasm</location>
    </subcellularLocation>
</comment>
<comment type="similarity">
    <text evidence="1">Belongs to the class-II aminoacyl-tRNA synthetase family. Phe-tRNA synthetase alpha subunit type 1 subfamily.</text>
</comment>
<proteinExistence type="inferred from homology"/>
<accession>B0VV85</accession>
<dbReference type="EC" id="6.1.1.20" evidence="1"/>
<dbReference type="EMBL" id="CU468230">
    <property type="protein sequence ID" value="CAP02198.1"/>
    <property type="molecule type" value="Genomic_DNA"/>
</dbReference>
<dbReference type="SMR" id="B0VV85"/>
<dbReference type="KEGG" id="abm:ABSDF2908"/>
<dbReference type="HOGENOM" id="CLU_025086_0_1_6"/>
<dbReference type="Proteomes" id="UP000001741">
    <property type="component" value="Chromosome"/>
</dbReference>
<dbReference type="GO" id="GO:0005737">
    <property type="term" value="C:cytoplasm"/>
    <property type="evidence" value="ECO:0007669"/>
    <property type="project" value="UniProtKB-SubCell"/>
</dbReference>
<dbReference type="GO" id="GO:0005524">
    <property type="term" value="F:ATP binding"/>
    <property type="evidence" value="ECO:0007669"/>
    <property type="project" value="UniProtKB-UniRule"/>
</dbReference>
<dbReference type="GO" id="GO:0000287">
    <property type="term" value="F:magnesium ion binding"/>
    <property type="evidence" value="ECO:0007669"/>
    <property type="project" value="UniProtKB-UniRule"/>
</dbReference>
<dbReference type="GO" id="GO:0004826">
    <property type="term" value="F:phenylalanine-tRNA ligase activity"/>
    <property type="evidence" value="ECO:0007669"/>
    <property type="project" value="UniProtKB-UniRule"/>
</dbReference>
<dbReference type="GO" id="GO:0000049">
    <property type="term" value="F:tRNA binding"/>
    <property type="evidence" value="ECO:0007669"/>
    <property type="project" value="InterPro"/>
</dbReference>
<dbReference type="GO" id="GO:0006432">
    <property type="term" value="P:phenylalanyl-tRNA aminoacylation"/>
    <property type="evidence" value="ECO:0007669"/>
    <property type="project" value="UniProtKB-UniRule"/>
</dbReference>
<dbReference type="CDD" id="cd00496">
    <property type="entry name" value="PheRS_alpha_core"/>
    <property type="match status" value="1"/>
</dbReference>
<dbReference type="FunFam" id="3.30.930.10:FF:000003">
    <property type="entry name" value="Phenylalanine--tRNA ligase alpha subunit"/>
    <property type="match status" value="1"/>
</dbReference>
<dbReference type="Gene3D" id="3.30.930.10">
    <property type="entry name" value="Bira Bifunctional Protein, Domain 2"/>
    <property type="match status" value="1"/>
</dbReference>
<dbReference type="HAMAP" id="MF_00281">
    <property type="entry name" value="Phe_tRNA_synth_alpha1"/>
    <property type="match status" value="1"/>
</dbReference>
<dbReference type="InterPro" id="IPR006195">
    <property type="entry name" value="aa-tRNA-synth_II"/>
</dbReference>
<dbReference type="InterPro" id="IPR045864">
    <property type="entry name" value="aa-tRNA-synth_II/BPL/LPL"/>
</dbReference>
<dbReference type="InterPro" id="IPR004529">
    <property type="entry name" value="Phe-tRNA-synth_IIc_asu"/>
</dbReference>
<dbReference type="InterPro" id="IPR004188">
    <property type="entry name" value="Phe-tRNA_ligase_II_N"/>
</dbReference>
<dbReference type="InterPro" id="IPR022911">
    <property type="entry name" value="Phe_tRNA_ligase_alpha1_bac"/>
</dbReference>
<dbReference type="InterPro" id="IPR002319">
    <property type="entry name" value="Phenylalanyl-tRNA_Synthase"/>
</dbReference>
<dbReference type="InterPro" id="IPR010978">
    <property type="entry name" value="tRNA-bd_arm"/>
</dbReference>
<dbReference type="NCBIfam" id="TIGR00468">
    <property type="entry name" value="pheS"/>
    <property type="match status" value="1"/>
</dbReference>
<dbReference type="PANTHER" id="PTHR11538:SF41">
    <property type="entry name" value="PHENYLALANINE--TRNA LIGASE, MITOCHONDRIAL"/>
    <property type="match status" value="1"/>
</dbReference>
<dbReference type="PANTHER" id="PTHR11538">
    <property type="entry name" value="PHENYLALANYL-TRNA SYNTHETASE"/>
    <property type="match status" value="1"/>
</dbReference>
<dbReference type="Pfam" id="PF02912">
    <property type="entry name" value="Phe_tRNA-synt_N"/>
    <property type="match status" value="1"/>
</dbReference>
<dbReference type="Pfam" id="PF01409">
    <property type="entry name" value="tRNA-synt_2d"/>
    <property type="match status" value="1"/>
</dbReference>
<dbReference type="SUPFAM" id="SSF55681">
    <property type="entry name" value="Class II aaRS and biotin synthetases"/>
    <property type="match status" value="1"/>
</dbReference>
<dbReference type="SUPFAM" id="SSF46589">
    <property type="entry name" value="tRNA-binding arm"/>
    <property type="match status" value="1"/>
</dbReference>
<dbReference type="PROSITE" id="PS50862">
    <property type="entry name" value="AA_TRNA_LIGASE_II"/>
    <property type="match status" value="1"/>
</dbReference>
<sequence>MRVTMSLEALTTEALAAIAAAQDLVALDQVRVQFTGKKSQLAEQSKALGKMDPEERKVQGAAIHAVRETINNALTERQTALQQAALAQKLASETIDITLPGRGQRVGTVHPVTQVQERICQFFTKAGFTVATGPEVEDDYHNFEALNIPGHHPARAMHDTFYFDANHLLRTHTSGVQIRTMETSQPPIRIVCPGRVYRCDSDQTHSPMFHQIEGLYVAENTSFAELKGLLINLLNEFFEKDLKVRFRPSYFPFTEPSAEVDIMDERGRWLEVLGCGMVHPNVLRAAGIDPDKYKGFAFGLGVERFAMLRYGINDLRMFYQNDVRFLRQFA</sequence>
<organism>
    <name type="scientific">Acinetobacter baumannii (strain SDF)</name>
    <dbReference type="NCBI Taxonomy" id="509170"/>
    <lineage>
        <taxon>Bacteria</taxon>
        <taxon>Pseudomonadati</taxon>
        <taxon>Pseudomonadota</taxon>
        <taxon>Gammaproteobacteria</taxon>
        <taxon>Moraxellales</taxon>
        <taxon>Moraxellaceae</taxon>
        <taxon>Acinetobacter</taxon>
        <taxon>Acinetobacter calcoaceticus/baumannii complex</taxon>
    </lineage>
</organism>
<keyword id="KW-0030">Aminoacyl-tRNA synthetase</keyword>
<keyword id="KW-0067">ATP-binding</keyword>
<keyword id="KW-0963">Cytoplasm</keyword>
<keyword id="KW-0436">Ligase</keyword>
<keyword id="KW-0460">Magnesium</keyword>
<keyword id="KW-0479">Metal-binding</keyword>
<keyword id="KW-0547">Nucleotide-binding</keyword>
<keyword id="KW-0648">Protein biosynthesis</keyword>
<gene>
    <name evidence="1" type="primary">pheS</name>
    <name type="ordered locus">ABSDF2908</name>
</gene>
<evidence type="ECO:0000255" key="1">
    <source>
        <dbReference type="HAMAP-Rule" id="MF_00281"/>
    </source>
</evidence>
<reference key="1">
    <citation type="journal article" date="2008" name="PLoS ONE">
        <title>Comparative analysis of Acinetobacters: three genomes for three lifestyles.</title>
        <authorList>
            <person name="Vallenet D."/>
            <person name="Nordmann P."/>
            <person name="Barbe V."/>
            <person name="Poirel L."/>
            <person name="Mangenot S."/>
            <person name="Bataille E."/>
            <person name="Dossat C."/>
            <person name="Gas S."/>
            <person name="Kreimeyer A."/>
            <person name="Lenoble P."/>
            <person name="Oztas S."/>
            <person name="Poulain J."/>
            <person name="Segurens B."/>
            <person name="Robert C."/>
            <person name="Abergel C."/>
            <person name="Claverie J.-M."/>
            <person name="Raoult D."/>
            <person name="Medigue C."/>
            <person name="Weissenbach J."/>
            <person name="Cruveiller S."/>
        </authorList>
    </citation>
    <scope>NUCLEOTIDE SEQUENCE [LARGE SCALE GENOMIC DNA]</scope>
    <source>
        <strain>SDF</strain>
    </source>
</reference>
<protein>
    <recommendedName>
        <fullName evidence="1">Phenylalanine--tRNA ligase alpha subunit</fullName>
        <ecNumber evidence="1">6.1.1.20</ecNumber>
    </recommendedName>
    <alternativeName>
        <fullName evidence="1">Phenylalanyl-tRNA synthetase alpha subunit</fullName>
        <shortName evidence="1">PheRS</shortName>
    </alternativeName>
</protein>
<feature type="chain" id="PRO_1000114839" description="Phenylalanine--tRNA ligase alpha subunit">
    <location>
        <begin position="1"/>
        <end position="330"/>
    </location>
</feature>
<feature type="binding site" evidence="1">
    <location>
        <position position="255"/>
    </location>
    <ligand>
        <name>Mg(2+)</name>
        <dbReference type="ChEBI" id="CHEBI:18420"/>
        <note>shared with beta subunit</note>
    </ligand>
</feature>
<name>SYFA_ACIBS</name>